<name>SRP54_METST</name>
<evidence type="ECO:0000255" key="1">
    <source>
        <dbReference type="HAMAP-Rule" id="MF_00306"/>
    </source>
</evidence>
<gene>
    <name evidence="1" type="primary">srp54</name>
    <name type="ordered locus">Msp_1539</name>
</gene>
<comment type="function">
    <text evidence="1">Involved in targeting and insertion of nascent membrane proteins into the cytoplasmic membrane. Binds to the hydrophobic signal sequence of the ribosome-nascent chain (RNC) as it emerges from the ribosomes. The SRP-RNC complex is then targeted to the cytoplasmic membrane where it interacts with the SRP receptor FtsY.</text>
</comment>
<comment type="catalytic activity">
    <reaction evidence="1">
        <text>GTP + H2O = GDP + phosphate + H(+)</text>
        <dbReference type="Rhea" id="RHEA:19669"/>
        <dbReference type="ChEBI" id="CHEBI:15377"/>
        <dbReference type="ChEBI" id="CHEBI:15378"/>
        <dbReference type="ChEBI" id="CHEBI:37565"/>
        <dbReference type="ChEBI" id="CHEBI:43474"/>
        <dbReference type="ChEBI" id="CHEBI:58189"/>
        <dbReference type="EC" id="3.6.5.4"/>
    </reaction>
</comment>
<comment type="subunit">
    <text evidence="1">Part of the signal recognition particle protein translocation system, which is composed of SRP and FtsY. Archaeal SRP consists of a 7S RNA molecule of 300 nucleotides and two protein subunits: SRP54 and SRP19.</text>
</comment>
<comment type="subcellular location">
    <subcellularLocation>
        <location evidence="1">Cytoplasm</location>
    </subcellularLocation>
    <text evidence="1">The SRP-RNC complex is targeted to the cytoplasmic membrane.</text>
</comment>
<comment type="domain">
    <text evidence="1">Composed of three domains: the N-terminal N domain, which is responsible for interactions with the ribosome, the central G domain, which binds GTP, and the C-terminal M domain, which binds the RNA and the signal sequence of the RNC.</text>
</comment>
<comment type="similarity">
    <text evidence="1">Belongs to the GTP-binding SRP family. SRP54 subfamily.</text>
</comment>
<accession>Q2NE47</accession>
<reference key="1">
    <citation type="journal article" date="2006" name="J. Bacteriol.">
        <title>The genome sequence of Methanosphaera stadtmanae reveals why this human intestinal archaeon is restricted to methanol and H2 for methane formation and ATP synthesis.</title>
        <authorList>
            <person name="Fricke W.F."/>
            <person name="Seedorf H."/>
            <person name="Henne A."/>
            <person name="Kruer M."/>
            <person name="Liesegang H."/>
            <person name="Hedderich R."/>
            <person name="Gottschalk G."/>
            <person name="Thauer R.K."/>
        </authorList>
    </citation>
    <scope>NUCLEOTIDE SEQUENCE [LARGE SCALE GENOMIC DNA]</scope>
    <source>
        <strain>ATCC 43021 / DSM 3091 / JCM 11832 / MCB-3</strain>
    </source>
</reference>
<organism>
    <name type="scientific">Methanosphaera stadtmanae (strain ATCC 43021 / DSM 3091 / JCM 11832 / MCB-3)</name>
    <dbReference type="NCBI Taxonomy" id="339860"/>
    <lineage>
        <taxon>Archaea</taxon>
        <taxon>Methanobacteriati</taxon>
        <taxon>Methanobacteriota</taxon>
        <taxon>Methanomada group</taxon>
        <taxon>Methanobacteria</taxon>
        <taxon>Methanobacteriales</taxon>
        <taxon>Methanobacteriaceae</taxon>
        <taxon>Methanosphaera</taxon>
    </lineage>
</organism>
<feature type="chain" id="PRO_0000300758" description="Signal recognition particle 54 kDa protein">
    <location>
        <begin position="1"/>
        <end position="444"/>
    </location>
</feature>
<feature type="binding site" evidence="1">
    <location>
        <begin position="106"/>
        <end position="113"/>
    </location>
    <ligand>
        <name>GTP</name>
        <dbReference type="ChEBI" id="CHEBI:37565"/>
    </ligand>
</feature>
<feature type="binding site" evidence="1">
    <location>
        <begin position="187"/>
        <end position="191"/>
    </location>
    <ligand>
        <name>GTP</name>
        <dbReference type="ChEBI" id="CHEBI:37565"/>
    </ligand>
</feature>
<feature type="binding site" evidence="1">
    <location>
        <begin position="245"/>
        <end position="248"/>
    </location>
    <ligand>
        <name>GTP</name>
        <dbReference type="ChEBI" id="CHEBI:37565"/>
    </ligand>
</feature>
<dbReference type="EC" id="3.6.5.4" evidence="1"/>
<dbReference type="EMBL" id="CP000102">
    <property type="protein sequence ID" value="ABC57906.1"/>
    <property type="molecule type" value="Genomic_DNA"/>
</dbReference>
<dbReference type="RefSeq" id="WP_011407105.1">
    <property type="nucleotide sequence ID" value="NC_007681.1"/>
</dbReference>
<dbReference type="SMR" id="Q2NE47"/>
<dbReference type="STRING" id="339860.Msp_1539"/>
<dbReference type="KEGG" id="mst:Msp_1539"/>
<dbReference type="eggNOG" id="arCOG01228">
    <property type="taxonomic scope" value="Archaea"/>
</dbReference>
<dbReference type="HOGENOM" id="CLU_009301_6_0_2"/>
<dbReference type="OrthoDB" id="52849at2157"/>
<dbReference type="Proteomes" id="UP000001931">
    <property type="component" value="Chromosome"/>
</dbReference>
<dbReference type="GO" id="GO:0048500">
    <property type="term" value="C:signal recognition particle"/>
    <property type="evidence" value="ECO:0007669"/>
    <property type="project" value="UniProtKB-UniRule"/>
</dbReference>
<dbReference type="GO" id="GO:0008312">
    <property type="term" value="F:7S RNA binding"/>
    <property type="evidence" value="ECO:0007669"/>
    <property type="project" value="UniProtKB-UniRule"/>
</dbReference>
<dbReference type="GO" id="GO:0016887">
    <property type="term" value="F:ATP hydrolysis activity"/>
    <property type="evidence" value="ECO:0007669"/>
    <property type="project" value="InterPro"/>
</dbReference>
<dbReference type="GO" id="GO:0005525">
    <property type="term" value="F:GTP binding"/>
    <property type="evidence" value="ECO:0007669"/>
    <property type="project" value="UniProtKB-UniRule"/>
</dbReference>
<dbReference type="GO" id="GO:0003924">
    <property type="term" value="F:GTPase activity"/>
    <property type="evidence" value="ECO:0007669"/>
    <property type="project" value="UniProtKB-UniRule"/>
</dbReference>
<dbReference type="GO" id="GO:0006614">
    <property type="term" value="P:SRP-dependent cotranslational protein targeting to membrane"/>
    <property type="evidence" value="ECO:0007669"/>
    <property type="project" value="InterPro"/>
</dbReference>
<dbReference type="CDD" id="cd17875">
    <property type="entry name" value="SRP54_G"/>
    <property type="match status" value="1"/>
</dbReference>
<dbReference type="FunFam" id="3.40.50.300:FF:000022">
    <property type="entry name" value="Signal recognition particle 54 kDa subunit"/>
    <property type="match status" value="1"/>
</dbReference>
<dbReference type="Gene3D" id="3.40.50.300">
    <property type="entry name" value="P-loop containing nucleotide triphosphate hydrolases"/>
    <property type="match status" value="1"/>
</dbReference>
<dbReference type="Gene3D" id="1.20.120.140">
    <property type="entry name" value="Signal recognition particle SRP54, nucleotide-binding domain"/>
    <property type="match status" value="1"/>
</dbReference>
<dbReference type="Gene3D" id="1.10.260.30">
    <property type="entry name" value="Signal recognition particle, SRP54 subunit, M-domain"/>
    <property type="match status" value="1"/>
</dbReference>
<dbReference type="HAMAP" id="MF_00306">
    <property type="entry name" value="SRP54"/>
    <property type="match status" value="1"/>
</dbReference>
<dbReference type="InterPro" id="IPR003593">
    <property type="entry name" value="AAA+_ATPase"/>
</dbReference>
<dbReference type="InterPro" id="IPR027417">
    <property type="entry name" value="P-loop_NTPase"/>
</dbReference>
<dbReference type="InterPro" id="IPR036891">
    <property type="entry name" value="Signal_recog_part_SRP54_M_sf"/>
</dbReference>
<dbReference type="InterPro" id="IPR013822">
    <property type="entry name" value="Signal_recog_particl_SRP54_hlx"/>
</dbReference>
<dbReference type="InterPro" id="IPR004125">
    <property type="entry name" value="Signal_recog_particle_SRP54_M"/>
</dbReference>
<dbReference type="InterPro" id="IPR036225">
    <property type="entry name" value="SRP/SRP_N"/>
</dbReference>
<dbReference type="InterPro" id="IPR022941">
    <property type="entry name" value="SRP54"/>
</dbReference>
<dbReference type="InterPro" id="IPR000897">
    <property type="entry name" value="SRP54_GTPase_dom"/>
</dbReference>
<dbReference type="InterPro" id="IPR042101">
    <property type="entry name" value="SRP54_N_sf"/>
</dbReference>
<dbReference type="PANTHER" id="PTHR11564">
    <property type="entry name" value="SIGNAL RECOGNITION PARTICLE 54K PROTEIN SRP54"/>
    <property type="match status" value="1"/>
</dbReference>
<dbReference type="PANTHER" id="PTHR11564:SF5">
    <property type="entry name" value="SIGNAL RECOGNITION PARTICLE SUBUNIT SRP54"/>
    <property type="match status" value="1"/>
</dbReference>
<dbReference type="Pfam" id="PF00448">
    <property type="entry name" value="SRP54"/>
    <property type="match status" value="1"/>
</dbReference>
<dbReference type="Pfam" id="PF02881">
    <property type="entry name" value="SRP54_N"/>
    <property type="match status" value="1"/>
</dbReference>
<dbReference type="Pfam" id="PF02978">
    <property type="entry name" value="SRP_SPB"/>
    <property type="match status" value="1"/>
</dbReference>
<dbReference type="SMART" id="SM00382">
    <property type="entry name" value="AAA"/>
    <property type="match status" value="1"/>
</dbReference>
<dbReference type="SMART" id="SM00962">
    <property type="entry name" value="SRP54"/>
    <property type="match status" value="1"/>
</dbReference>
<dbReference type="SMART" id="SM00963">
    <property type="entry name" value="SRP54_N"/>
    <property type="match status" value="1"/>
</dbReference>
<dbReference type="SUPFAM" id="SSF47364">
    <property type="entry name" value="Domain of the SRP/SRP receptor G-proteins"/>
    <property type="match status" value="1"/>
</dbReference>
<dbReference type="SUPFAM" id="SSF52540">
    <property type="entry name" value="P-loop containing nucleoside triphosphate hydrolases"/>
    <property type="match status" value="1"/>
</dbReference>
<dbReference type="SUPFAM" id="SSF47446">
    <property type="entry name" value="Signal peptide-binding domain"/>
    <property type="match status" value="1"/>
</dbReference>
<dbReference type="PROSITE" id="PS00300">
    <property type="entry name" value="SRP54"/>
    <property type="match status" value="1"/>
</dbReference>
<proteinExistence type="inferred from homology"/>
<protein>
    <recommendedName>
        <fullName evidence="1">Signal recognition particle 54 kDa protein</fullName>
        <shortName evidence="1">SRP54</shortName>
        <ecNumber evidence="1">3.6.5.4</ecNumber>
    </recommendedName>
</protein>
<sequence>MLEGLSESLTQTMKKLAGMSIIDKKTLKDVTKDIQRALIQSDVNVKVVFGLTKKIEKRALEEELPKGLSPKEHVMRIVYQELVNLIGEKPEELKINRKPYKIMMLGLQGSGKTTTTAKLVKHLKKKGHTSAIVCTDTWRPAAYEQLRQLTEPLDVPVFGDPENKDAIDLAKKGLEKCGSKYDVILVDTAGRHKEEKDLLDEMAELSQIVQPDEVILVIDGTIGQQARSQAETFKKTTDIGSIIVSKLDGSAKGGGALSAVAEIRAPIKFIGTGERVDDFEAFDPERFISRLLGMGDLDTLIEKAAEVTSEKSDKEMIDSIISGKFTLKDMENQLEMMNKMGPIQQIMKLIPGLGNQLPANASKVTEEKLGMYKILMNSMTTYELENPEVIKKSRINRISRGAGLTNDDVKDLLKYYNVTKKALKGMGKRNMSGPMGKLMRHMQR</sequence>
<keyword id="KW-0963">Cytoplasm</keyword>
<keyword id="KW-0342">GTP-binding</keyword>
<keyword id="KW-0378">Hydrolase</keyword>
<keyword id="KW-0547">Nucleotide-binding</keyword>
<keyword id="KW-1185">Reference proteome</keyword>
<keyword id="KW-0687">Ribonucleoprotein</keyword>
<keyword id="KW-0694">RNA-binding</keyword>
<keyword id="KW-0733">Signal recognition particle</keyword>